<reference key="1">
    <citation type="journal article" date="2019" name="Angew. Chem. Int. Ed.">
        <title>Scalable biosynthesis of the seaweed neurochemical, kainic acid.</title>
        <authorList>
            <person name="Chekan J.R."/>
            <person name="McKinnie S.M.K."/>
            <person name="Moore M.L."/>
            <person name="Poplawski S.G."/>
            <person name="Michael T.P."/>
            <person name="Moore B.S."/>
        </authorList>
    </citation>
    <scope>NUCLEOTIDE SEQUENCE [GENOMIC DNA]</scope>
    <scope>FUNCTION</scope>
    <scope>CATALYTIC ACTIVITY</scope>
    <scope>PATHWAY</scope>
    <scope>ACTIVITY REGULATION</scope>
    <scope>BIOTECHNOLOGY</scope>
</reference>
<reference key="2">
    <citation type="journal article" date="1998" name="Nat. Toxins">
        <title>The activation of glutamate receptors by kainic acid and domoic acid.</title>
        <authorList>
            <person name="Hampson D.R."/>
            <person name="Manalo J.L."/>
        </authorList>
    </citation>
    <scope>REVIEW ON NEUROTOXIC ACTIVITY</scope>
</reference>
<gene>
    <name evidence="3" type="primary">kabC</name>
</gene>
<feature type="chain" id="PRO_0000454272" description="Alpha-ketoglutarate dependent kainoid synthase">
    <location>
        <begin position="1"/>
        <end position="360"/>
    </location>
</feature>
<feature type="domain" description="Fe2OG dioxygenase" evidence="1">
    <location>
        <begin position="200"/>
        <end position="310"/>
    </location>
</feature>
<feature type="binding site" evidence="1">
    <location>
        <position position="225"/>
    </location>
    <ligand>
        <name>Fe cation</name>
        <dbReference type="ChEBI" id="CHEBI:24875"/>
    </ligand>
</feature>
<feature type="binding site" evidence="1">
    <location>
        <position position="227"/>
    </location>
    <ligand>
        <name>Fe cation</name>
        <dbReference type="ChEBI" id="CHEBI:24875"/>
    </ligand>
</feature>
<feature type="binding site" evidence="1">
    <location>
        <position position="286"/>
    </location>
    <ligand>
        <name>Fe cation</name>
        <dbReference type="ChEBI" id="CHEBI:24875"/>
    </ligand>
</feature>
<feature type="binding site" evidence="1">
    <location>
        <position position="301"/>
    </location>
    <ligand>
        <name>2-oxoglutarate</name>
        <dbReference type="ChEBI" id="CHEBI:16810"/>
    </ligand>
</feature>
<organism>
    <name type="scientific">Digenea simplex</name>
    <name type="common">Marine red alga</name>
    <name type="synonym">Conferva simplex</name>
    <dbReference type="NCBI Taxonomy" id="945030"/>
    <lineage>
        <taxon>Eukaryota</taxon>
        <taxon>Rhodophyta</taxon>
        <taxon>Florideophyceae</taxon>
        <taxon>Rhodymeniophycidae</taxon>
        <taxon>Ceramiales</taxon>
        <taxon>Rhodomelaceae</taxon>
        <taxon>Polysiphonioideae</taxon>
        <taxon>Digenea</taxon>
    </lineage>
</organism>
<proteinExistence type="evidence at protein level"/>
<evidence type="ECO:0000255" key="1">
    <source>
        <dbReference type="PROSITE-ProRule" id="PRU00805"/>
    </source>
</evidence>
<evidence type="ECO:0000269" key="2">
    <source>
    </source>
</evidence>
<evidence type="ECO:0000303" key="3">
    <source>
    </source>
</evidence>
<evidence type="ECO:0000305" key="4"/>
<keyword id="KW-0223">Dioxygenase</keyword>
<keyword id="KW-0408">Iron</keyword>
<keyword id="KW-0479">Metal-binding</keyword>
<keyword id="KW-0560">Oxidoreductase</keyword>
<dbReference type="EC" id="1.14.11.-" evidence="1 2"/>
<dbReference type="EMBL" id="MK312630">
    <property type="protein sequence ID" value="QCC62383.1"/>
    <property type="molecule type" value="Genomic_DNA"/>
</dbReference>
<dbReference type="SMR" id="A0A4D6IA61"/>
<dbReference type="GO" id="GO:0051213">
    <property type="term" value="F:dioxygenase activity"/>
    <property type="evidence" value="ECO:0007669"/>
    <property type="project" value="UniProtKB-KW"/>
</dbReference>
<dbReference type="GO" id="GO:0046872">
    <property type="term" value="F:metal ion binding"/>
    <property type="evidence" value="ECO:0007669"/>
    <property type="project" value="UniProtKB-KW"/>
</dbReference>
<dbReference type="Gene3D" id="2.60.120.330">
    <property type="entry name" value="B-lactam Antibiotic, Isopenicillin N Synthase, Chain"/>
    <property type="match status" value="1"/>
</dbReference>
<dbReference type="InterPro" id="IPR026992">
    <property type="entry name" value="DIOX_N"/>
</dbReference>
<dbReference type="InterPro" id="IPR044861">
    <property type="entry name" value="IPNS-like_FE2OG_OXY"/>
</dbReference>
<dbReference type="InterPro" id="IPR027443">
    <property type="entry name" value="IPNS-like_sf"/>
</dbReference>
<dbReference type="InterPro" id="IPR050231">
    <property type="entry name" value="Iron_ascorbate_oxido_reductase"/>
</dbReference>
<dbReference type="InterPro" id="IPR005123">
    <property type="entry name" value="Oxoglu/Fe-dep_dioxygenase_dom"/>
</dbReference>
<dbReference type="PANTHER" id="PTHR47990">
    <property type="entry name" value="2-OXOGLUTARATE (2OG) AND FE(II)-DEPENDENT OXYGENASE SUPERFAMILY PROTEIN-RELATED"/>
    <property type="match status" value="1"/>
</dbReference>
<dbReference type="Pfam" id="PF03171">
    <property type="entry name" value="2OG-FeII_Oxy"/>
    <property type="match status" value="1"/>
</dbReference>
<dbReference type="Pfam" id="PF14226">
    <property type="entry name" value="DIOX_N"/>
    <property type="match status" value="1"/>
</dbReference>
<dbReference type="PRINTS" id="PR00682">
    <property type="entry name" value="IPNSYNTHASE"/>
</dbReference>
<dbReference type="SUPFAM" id="SSF51197">
    <property type="entry name" value="Clavaminate synthase-like"/>
    <property type="match status" value="1"/>
</dbReference>
<dbReference type="PROSITE" id="PS51471">
    <property type="entry name" value="FE2OG_OXY"/>
    <property type="match status" value="1"/>
</dbReference>
<comment type="function">
    <text evidence="2">Iron/ascorbate-dependent oxidoreductase: part of the gene cluster that mediates the biosynthesis of kainic acid (KA) and derivatives, natural products with neurochemical activity acting as ionotropic glutamate receptor (iGluR) agonists, thus being neurotoxins (PubMed:30995339). Catalyzes the conversion of prekainic acid to kainic acid and kainic acid lactone (PubMed:30995339).</text>
</comment>
<comment type="catalytic activity">
    <reaction evidence="2">
        <text>prekainate + 2-oxoglutarate + O2 = kainate + succinate + CO2 + H2O</text>
        <dbReference type="Rhea" id="RHEA:67480"/>
        <dbReference type="ChEBI" id="CHEBI:15377"/>
        <dbReference type="ChEBI" id="CHEBI:15379"/>
        <dbReference type="ChEBI" id="CHEBI:16526"/>
        <dbReference type="ChEBI" id="CHEBI:16810"/>
        <dbReference type="ChEBI" id="CHEBI:30031"/>
        <dbReference type="ChEBI" id="CHEBI:156548"/>
        <dbReference type="ChEBI" id="CHEBI:170011"/>
    </reaction>
    <physiologicalReaction direction="left-to-right" evidence="2">
        <dbReference type="Rhea" id="RHEA:67481"/>
    </physiologicalReaction>
</comment>
<comment type="catalytic activity">
    <reaction evidence="2">
        <text>prekainate + 2-oxoglutarate + O2 + H(+) = kainate lactone + succinate + CO2 + H2O</text>
        <dbReference type="Rhea" id="RHEA:68224"/>
        <dbReference type="ChEBI" id="CHEBI:15377"/>
        <dbReference type="ChEBI" id="CHEBI:15378"/>
        <dbReference type="ChEBI" id="CHEBI:15379"/>
        <dbReference type="ChEBI" id="CHEBI:16526"/>
        <dbReference type="ChEBI" id="CHEBI:16810"/>
        <dbReference type="ChEBI" id="CHEBI:30031"/>
        <dbReference type="ChEBI" id="CHEBI:170011"/>
        <dbReference type="ChEBI" id="CHEBI:177124"/>
    </reaction>
    <physiologicalReaction direction="left-to-right" evidence="2">
        <dbReference type="Rhea" id="RHEA:68225"/>
    </physiologicalReaction>
</comment>
<comment type="cofactor">
    <cofactor evidence="1">
        <name>Fe(2+)</name>
        <dbReference type="ChEBI" id="CHEBI:29033"/>
    </cofactor>
    <text evidence="1">Binds 1 Fe(2+) ion per subunit.</text>
</comment>
<comment type="activity regulation">
    <text evidence="2">Inhibited by the iron chelator EDTA.</text>
</comment>
<comment type="pathway">
    <text evidence="2">Secondary metabolite biosynthesis.</text>
</comment>
<comment type="biotechnology">
    <text evidence="2">Escherichia coli cells expressing Digenea simplex kabC are successfully converting supplied synthetic prekainic acid into kainic acid, thus providing a less expensive method to produce this molecule for neuro-pharmacological applications.</text>
</comment>
<comment type="similarity">
    <text evidence="4">Belongs to the iron/ascorbate-dependent oxidoreductase family.</text>
</comment>
<name>KABC_DIGSM</name>
<protein>
    <recommendedName>
        <fullName evidence="3">Alpha-ketoglutarate dependent kainoid synthase</fullName>
        <shortName evidence="3">Alpha-KG dependent kainoid synthase</shortName>
        <ecNumber evidence="1 2">1.14.11.-</ecNumber>
    </recommendedName>
    <alternativeName>
        <fullName evidence="3">Kainic acid biosynthesis cluster protein C</fullName>
        <shortName evidence="3">DsKabC</shortName>
    </alternativeName>
</protein>
<accession>A0A4D6IA61</accession>
<sequence length="360" mass="41163">MTVSKYNGVASTFNGVARRFDFAPLEADKLNWYPRSALPPEIPAIDLNKVNTEEELAQFLVDIRKSGLFYIVDHGIPEEISIGCYNAFREFCNLPEEAREKYNTDESFKSGGYVPFKGTSIGGGNLFERQKDFVVKFFWRGPSVVNRSPNDRFAEFHDEHHRKTAELAEKIITTILKALKTRFPEFHPDELKDNINVRNMFFSNRIYPEAPPDDGEKADYRLVPHRDLSFITLANQVPANNGFKGLFILTGDGEKIPVPPIRNSYLVFIGQGLSYLTNKYLPAALHGVDFPDNTNFEGSERASLISFYEPNDYMMPSKNINPLPEEIFEKSCTFYDDVGVGRAGTTYNYVRYKFHEGYYL</sequence>